<feature type="chain" id="PRO_1000129756" description="Argininosuccinate synthase">
    <location>
        <begin position="1"/>
        <end position="447"/>
    </location>
</feature>
<feature type="binding site" evidence="1">
    <location>
        <begin position="17"/>
        <end position="25"/>
    </location>
    <ligand>
        <name>ATP</name>
        <dbReference type="ChEBI" id="CHEBI:30616"/>
    </ligand>
</feature>
<feature type="binding site" evidence="1">
    <location>
        <position position="43"/>
    </location>
    <ligand>
        <name>ATP</name>
        <dbReference type="ChEBI" id="CHEBI:30616"/>
    </ligand>
</feature>
<feature type="binding site" evidence="1">
    <location>
        <position position="99"/>
    </location>
    <ligand>
        <name>L-citrulline</name>
        <dbReference type="ChEBI" id="CHEBI:57743"/>
    </ligand>
</feature>
<feature type="binding site" evidence="1">
    <location>
        <position position="129"/>
    </location>
    <ligand>
        <name>ATP</name>
        <dbReference type="ChEBI" id="CHEBI:30616"/>
    </ligand>
</feature>
<feature type="binding site" evidence="1">
    <location>
        <position position="131"/>
    </location>
    <ligand>
        <name>ATP</name>
        <dbReference type="ChEBI" id="CHEBI:30616"/>
    </ligand>
</feature>
<feature type="binding site" evidence="1">
    <location>
        <position position="131"/>
    </location>
    <ligand>
        <name>L-aspartate</name>
        <dbReference type="ChEBI" id="CHEBI:29991"/>
    </ligand>
</feature>
<feature type="binding site" evidence="1">
    <location>
        <position position="135"/>
    </location>
    <ligand>
        <name>L-aspartate</name>
        <dbReference type="ChEBI" id="CHEBI:29991"/>
    </ligand>
</feature>
<feature type="binding site" evidence="1">
    <location>
        <position position="135"/>
    </location>
    <ligand>
        <name>L-citrulline</name>
        <dbReference type="ChEBI" id="CHEBI:57743"/>
    </ligand>
</feature>
<feature type="binding site" evidence="1">
    <location>
        <position position="136"/>
    </location>
    <ligand>
        <name>ATP</name>
        <dbReference type="ChEBI" id="CHEBI:30616"/>
    </ligand>
</feature>
<feature type="binding site" evidence="1">
    <location>
        <position position="136"/>
    </location>
    <ligand>
        <name>L-aspartate</name>
        <dbReference type="ChEBI" id="CHEBI:29991"/>
    </ligand>
</feature>
<feature type="binding site" evidence="1">
    <location>
        <position position="139"/>
    </location>
    <ligand>
        <name>L-citrulline</name>
        <dbReference type="ChEBI" id="CHEBI:57743"/>
    </ligand>
</feature>
<feature type="binding site" evidence="1">
    <location>
        <position position="192"/>
    </location>
    <ligand>
        <name>L-citrulline</name>
        <dbReference type="ChEBI" id="CHEBI:57743"/>
    </ligand>
</feature>
<feature type="binding site" evidence="1">
    <location>
        <position position="194"/>
    </location>
    <ligand>
        <name>ATP</name>
        <dbReference type="ChEBI" id="CHEBI:30616"/>
    </ligand>
</feature>
<feature type="binding site" evidence="1">
    <location>
        <position position="201"/>
    </location>
    <ligand>
        <name>L-citrulline</name>
        <dbReference type="ChEBI" id="CHEBI:57743"/>
    </ligand>
</feature>
<feature type="binding site" evidence="1">
    <location>
        <position position="203"/>
    </location>
    <ligand>
        <name>L-citrulline</name>
        <dbReference type="ChEBI" id="CHEBI:57743"/>
    </ligand>
</feature>
<feature type="binding site" evidence="1">
    <location>
        <position position="280"/>
    </location>
    <ligand>
        <name>L-citrulline</name>
        <dbReference type="ChEBI" id="CHEBI:57743"/>
    </ligand>
</feature>
<accession>B5XSX1</accession>
<evidence type="ECO:0000255" key="1">
    <source>
        <dbReference type="HAMAP-Rule" id="MF_00581"/>
    </source>
</evidence>
<reference key="1">
    <citation type="journal article" date="2008" name="PLoS Genet.">
        <title>Complete genome sequence of the N2-fixing broad host range endophyte Klebsiella pneumoniae 342 and virulence predictions verified in mice.</title>
        <authorList>
            <person name="Fouts D.E."/>
            <person name="Tyler H.L."/>
            <person name="DeBoy R.T."/>
            <person name="Daugherty S."/>
            <person name="Ren Q."/>
            <person name="Badger J.H."/>
            <person name="Durkin A.S."/>
            <person name="Huot H."/>
            <person name="Shrivastava S."/>
            <person name="Kothari S."/>
            <person name="Dodson R.J."/>
            <person name="Mohamoud Y."/>
            <person name="Khouri H."/>
            <person name="Roesch L.F.W."/>
            <person name="Krogfelt K.A."/>
            <person name="Struve C."/>
            <person name="Triplett E.W."/>
            <person name="Methe B.A."/>
        </authorList>
    </citation>
    <scope>NUCLEOTIDE SEQUENCE [LARGE SCALE GENOMIC DNA]</scope>
    <source>
        <strain>342</strain>
    </source>
</reference>
<name>ASSY_KLEP3</name>
<comment type="catalytic activity">
    <reaction evidence="1">
        <text>L-citrulline + L-aspartate + ATP = 2-(N(omega)-L-arginino)succinate + AMP + diphosphate + H(+)</text>
        <dbReference type="Rhea" id="RHEA:10932"/>
        <dbReference type="ChEBI" id="CHEBI:15378"/>
        <dbReference type="ChEBI" id="CHEBI:29991"/>
        <dbReference type="ChEBI" id="CHEBI:30616"/>
        <dbReference type="ChEBI" id="CHEBI:33019"/>
        <dbReference type="ChEBI" id="CHEBI:57472"/>
        <dbReference type="ChEBI" id="CHEBI:57743"/>
        <dbReference type="ChEBI" id="CHEBI:456215"/>
        <dbReference type="EC" id="6.3.4.5"/>
    </reaction>
</comment>
<comment type="pathway">
    <text evidence="1">Amino-acid biosynthesis; L-arginine biosynthesis; L-arginine from L-ornithine and carbamoyl phosphate: step 2/3.</text>
</comment>
<comment type="subunit">
    <text evidence="1">Homotetramer.</text>
</comment>
<comment type="subcellular location">
    <subcellularLocation>
        <location evidence="1">Cytoplasm</location>
    </subcellularLocation>
</comment>
<comment type="similarity">
    <text evidence="1">Belongs to the argininosuccinate synthase family. Type 2 subfamily.</text>
</comment>
<proteinExistence type="inferred from homology"/>
<keyword id="KW-0028">Amino-acid biosynthesis</keyword>
<keyword id="KW-0055">Arginine biosynthesis</keyword>
<keyword id="KW-0067">ATP-binding</keyword>
<keyword id="KW-0963">Cytoplasm</keyword>
<keyword id="KW-0436">Ligase</keyword>
<keyword id="KW-0547">Nucleotide-binding</keyword>
<sequence>MTTILKHLPVGQRIGIAFSGGLDTSAALLWMRKKGAVPYAYTANLGQPDEDDYDAIPRRAKEYGAEGARLIDCRKQLVAEGIAAIQCGAFHNTTGGLTYFNTTPLGRAVTGTMLVAAMKEDGVNIWGDGSTYKGNDIERFYRYGLLTNAELQIYKPWLDSDFIDELGGRHEMSEFMIACGFDYKMSVEKAYSTDSNMLGATHEAKDLEFLNSSVKIVNPIMGVKFWDENVKIPAEEVTVLFEQGHPVALNGKTFADDVEMMLEANRIGGRHGLGMSDQIENRIIEAKSRGIYEAPGMALLHIAYERLLTGIHNEDTIEQYHAHGRQLGRLLYQGRWFDSQALMLRDSLQRWVASQITGEVTLELRRGNDYSILNTVSDNLTYKAERLTMEKGDSMFTAEDRIGQLTMRNLDITDTREKLFGYAQSGLLSASSATGLPQVENLENKGK</sequence>
<organism>
    <name type="scientific">Klebsiella pneumoniae (strain 342)</name>
    <dbReference type="NCBI Taxonomy" id="507522"/>
    <lineage>
        <taxon>Bacteria</taxon>
        <taxon>Pseudomonadati</taxon>
        <taxon>Pseudomonadota</taxon>
        <taxon>Gammaproteobacteria</taxon>
        <taxon>Enterobacterales</taxon>
        <taxon>Enterobacteriaceae</taxon>
        <taxon>Klebsiella/Raoultella group</taxon>
        <taxon>Klebsiella</taxon>
        <taxon>Klebsiella pneumoniae complex</taxon>
    </lineage>
</organism>
<dbReference type="EC" id="6.3.4.5" evidence="1"/>
<dbReference type="EMBL" id="CP000964">
    <property type="protein sequence ID" value="ACI10084.1"/>
    <property type="molecule type" value="Genomic_DNA"/>
</dbReference>
<dbReference type="SMR" id="B5XSX1"/>
<dbReference type="KEGG" id="kpe:KPK_0542"/>
<dbReference type="HOGENOM" id="CLU_032784_4_1_6"/>
<dbReference type="UniPathway" id="UPA00068">
    <property type="reaction ID" value="UER00113"/>
</dbReference>
<dbReference type="Proteomes" id="UP000001734">
    <property type="component" value="Chromosome"/>
</dbReference>
<dbReference type="GO" id="GO:0005737">
    <property type="term" value="C:cytoplasm"/>
    <property type="evidence" value="ECO:0007669"/>
    <property type="project" value="UniProtKB-SubCell"/>
</dbReference>
<dbReference type="GO" id="GO:0004055">
    <property type="term" value="F:argininosuccinate synthase activity"/>
    <property type="evidence" value="ECO:0007669"/>
    <property type="project" value="UniProtKB-UniRule"/>
</dbReference>
<dbReference type="GO" id="GO:0005524">
    <property type="term" value="F:ATP binding"/>
    <property type="evidence" value="ECO:0007669"/>
    <property type="project" value="UniProtKB-UniRule"/>
</dbReference>
<dbReference type="GO" id="GO:0042803">
    <property type="term" value="F:protein homodimerization activity"/>
    <property type="evidence" value="ECO:0007669"/>
    <property type="project" value="InterPro"/>
</dbReference>
<dbReference type="GO" id="GO:0000053">
    <property type="term" value="P:argininosuccinate metabolic process"/>
    <property type="evidence" value="ECO:0007669"/>
    <property type="project" value="TreeGrafter"/>
</dbReference>
<dbReference type="GO" id="GO:0006526">
    <property type="term" value="P:L-arginine biosynthetic process"/>
    <property type="evidence" value="ECO:0007669"/>
    <property type="project" value="UniProtKB-UniRule"/>
</dbReference>
<dbReference type="GO" id="GO:0000050">
    <property type="term" value="P:urea cycle"/>
    <property type="evidence" value="ECO:0007669"/>
    <property type="project" value="TreeGrafter"/>
</dbReference>
<dbReference type="CDD" id="cd01999">
    <property type="entry name" value="ASS"/>
    <property type="match status" value="1"/>
</dbReference>
<dbReference type="FunFam" id="1.10.287.400:FF:000001">
    <property type="entry name" value="Argininosuccinate synthase"/>
    <property type="match status" value="1"/>
</dbReference>
<dbReference type="Gene3D" id="1.10.287.400">
    <property type="match status" value="1"/>
</dbReference>
<dbReference type="Gene3D" id="3.90.1260.10">
    <property type="entry name" value="Argininosuccinate synthetase, chain A, domain 2"/>
    <property type="match status" value="1"/>
</dbReference>
<dbReference type="Gene3D" id="3.40.50.620">
    <property type="entry name" value="HUPs"/>
    <property type="match status" value="1"/>
</dbReference>
<dbReference type="HAMAP" id="MF_00581">
    <property type="entry name" value="Arg_succ_synth_type2"/>
    <property type="match status" value="1"/>
</dbReference>
<dbReference type="InterPro" id="IPR023437">
    <property type="entry name" value="Arg_succ_synth_type2_subfam"/>
</dbReference>
<dbReference type="InterPro" id="IPR048268">
    <property type="entry name" value="Arginosuc_syn_C"/>
</dbReference>
<dbReference type="InterPro" id="IPR048267">
    <property type="entry name" value="Arginosuc_syn_N"/>
</dbReference>
<dbReference type="InterPro" id="IPR001518">
    <property type="entry name" value="Arginosuc_synth"/>
</dbReference>
<dbReference type="InterPro" id="IPR018223">
    <property type="entry name" value="Arginosuc_synth_CS"/>
</dbReference>
<dbReference type="InterPro" id="IPR023434">
    <property type="entry name" value="Arginosuc_synth_type_1_subfam"/>
</dbReference>
<dbReference type="InterPro" id="IPR024074">
    <property type="entry name" value="AS_cat/multimer_dom_body"/>
</dbReference>
<dbReference type="InterPro" id="IPR024073">
    <property type="entry name" value="AS_multimer_C_tail"/>
</dbReference>
<dbReference type="InterPro" id="IPR014729">
    <property type="entry name" value="Rossmann-like_a/b/a_fold"/>
</dbReference>
<dbReference type="NCBIfam" id="TIGR00032">
    <property type="entry name" value="argG"/>
    <property type="match status" value="1"/>
</dbReference>
<dbReference type="NCBIfam" id="NF003779">
    <property type="entry name" value="PRK05370.1"/>
    <property type="match status" value="1"/>
</dbReference>
<dbReference type="PANTHER" id="PTHR11587">
    <property type="entry name" value="ARGININOSUCCINATE SYNTHASE"/>
    <property type="match status" value="1"/>
</dbReference>
<dbReference type="PANTHER" id="PTHR11587:SF2">
    <property type="entry name" value="ARGININOSUCCINATE SYNTHASE"/>
    <property type="match status" value="1"/>
</dbReference>
<dbReference type="Pfam" id="PF20979">
    <property type="entry name" value="Arginosuc_syn_C"/>
    <property type="match status" value="1"/>
</dbReference>
<dbReference type="Pfam" id="PF00764">
    <property type="entry name" value="Arginosuc_synth"/>
    <property type="match status" value="1"/>
</dbReference>
<dbReference type="SUPFAM" id="SSF52402">
    <property type="entry name" value="Adenine nucleotide alpha hydrolases-like"/>
    <property type="match status" value="1"/>
</dbReference>
<dbReference type="SUPFAM" id="SSF69864">
    <property type="entry name" value="Argininosuccinate synthetase, C-terminal domain"/>
    <property type="match status" value="1"/>
</dbReference>
<dbReference type="PROSITE" id="PS00564">
    <property type="entry name" value="ARGININOSUCCIN_SYN_1"/>
    <property type="match status" value="1"/>
</dbReference>
<dbReference type="PROSITE" id="PS00565">
    <property type="entry name" value="ARGININOSUCCIN_SYN_2"/>
    <property type="match status" value="1"/>
</dbReference>
<gene>
    <name evidence="1" type="primary">argG</name>
    <name type="ordered locus">KPK_0542</name>
</gene>
<protein>
    <recommendedName>
        <fullName evidence="1">Argininosuccinate synthase</fullName>
        <ecNumber evidence="1">6.3.4.5</ecNumber>
    </recommendedName>
    <alternativeName>
        <fullName evidence="1">Citrulline--aspartate ligase</fullName>
    </alternativeName>
</protein>